<reference key="1">
    <citation type="journal article" date="1997" name="Microbiology">
        <title>A 23911 bp region of the Bacillus subtilis genome comprising genes located upstream and downstream of the lev operon.</title>
        <authorList>
            <person name="Parro V."/>
            <person name="San Roman M."/>
            <person name="Galindo I."/>
            <person name="Purnelle B."/>
            <person name="Bolotin A."/>
            <person name="Sorokin A."/>
            <person name="Mellado R.P."/>
        </authorList>
    </citation>
    <scope>NUCLEOTIDE SEQUENCE [GENOMIC DNA]</scope>
    <source>
        <strain>168</strain>
    </source>
</reference>
<reference key="2">
    <citation type="journal article" date="1997" name="Microbiology">
        <title>Sequence of the Bacillus subtilis genome region in the vicinity of the lev operon reveals two new extracytoplasmic function RNA polymerase sigma factors SigV and SigZ.</title>
        <authorList>
            <person name="Sorokin A."/>
            <person name="Bolotin A."/>
            <person name="Purnelle B."/>
            <person name="Hilbert H."/>
            <person name="Lauber J."/>
            <person name="Duesterhoeft A."/>
            <person name="Ehrlich S.D."/>
        </authorList>
    </citation>
    <scope>NUCLEOTIDE SEQUENCE [GENOMIC DNA]</scope>
    <source>
        <strain>168</strain>
    </source>
</reference>
<reference key="3">
    <citation type="journal article" date="1997" name="Nature">
        <title>The complete genome sequence of the Gram-positive bacterium Bacillus subtilis.</title>
        <authorList>
            <person name="Kunst F."/>
            <person name="Ogasawara N."/>
            <person name="Moszer I."/>
            <person name="Albertini A.M."/>
            <person name="Alloni G."/>
            <person name="Azevedo V."/>
            <person name="Bertero M.G."/>
            <person name="Bessieres P."/>
            <person name="Bolotin A."/>
            <person name="Borchert S."/>
            <person name="Borriss R."/>
            <person name="Boursier L."/>
            <person name="Brans A."/>
            <person name="Braun M."/>
            <person name="Brignell S.C."/>
            <person name="Bron S."/>
            <person name="Brouillet S."/>
            <person name="Bruschi C.V."/>
            <person name="Caldwell B."/>
            <person name="Capuano V."/>
            <person name="Carter N.M."/>
            <person name="Choi S.-K."/>
            <person name="Codani J.-J."/>
            <person name="Connerton I.F."/>
            <person name="Cummings N.J."/>
            <person name="Daniel R.A."/>
            <person name="Denizot F."/>
            <person name="Devine K.M."/>
            <person name="Duesterhoeft A."/>
            <person name="Ehrlich S.D."/>
            <person name="Emmerson P.T."/>
            <person name="Entian K.-D."/>
            <person name="Errington J."/>
            <person name="Fabret C."/>
            <person name="Ferrari E."/>
            <person name="Foulger D."/>
            <person name="Fritz C."/>
            <person name="Fujita M."/>
            <person name="Fujita Y."/>
            <person name="Fuma S."/>
            <person name="Galizzi A."/>
            <person name="Galleron N."/>
            <person name="Ghim S.-Y."/>
            <person name="Glaser P."/>
            <person name="Goffeau A."/>
            <person name="Golightly E.J."/>
            <person name="Grandi G."/>
            <person name="Guiseppi G."/>
            <person name="Guy B.J."/>
            <person name="Haga K."/>
            <person name="Haiech J."/>
            <person name="Harwood C.R."/>
            <person name="Henaut A."/>
            <person name="Hilbert H."/>
            <person name="Holsappel S."/>
            <person name="Hosono S."/>
            <person name="Hullo M.-F."/>
            <person name="Itaya M."/>
            <person name="Jones L.-M."/>
            <person name="Joris B."/>
            <person name="Karamata D."/>
            <person name="Kasahara Y."/>
            <person name="Klaerr-Blanchard M."/>
            <person name="Klein C."/>
            <person name="Kobayashi Y."/>
            <person name="Koetter P."/>
            <person name="Koningstein G."/>
            <person name="Krogh S."/>
            <person name="Kumano M."/>
            <person name="Kurita K."/>
            <person name="Lapidus A."/>
            <person name="Lardinois S."/>
            <person name="Lauber J."/>
            <person name="Lazarevic V."/>
            <person name="Lee S.-M."/>
            <person name="Levine A."/>
            <person name="Liu H."/>
            <person name="Masuda S."/>
            <person name="Mauel C."/>
            <person name="Medigue C."/>
            <person name="Medina N."/>
            <person name="Mellado R.P."/>
            <person name="Mizuno M."/>
            <person name="Moestl D."/>
            <person name="Nakai S."/>
            <person name="Noback M."/>
            <person name="Noone D."/>
            <person name="O'Reilly M."/>
            <person name="Ogawa K."/>
            <person name="Ogiwara A."/>
            <person name="Oudega B."/>
            <person name="Park S.-H."/>
            <person name="Parro V."/>
            <person name="Pohl T.M."/>
            <person name="Portetelle D."/>
            <person name="Porwollik S."/>
            <person name="Prescott A.M."/>
            <person name="Presecan E."/>
            <person name="Pujic P."/>
            <person name="Purnelle B."/>
            <person name="Rapoport G."/>
            <person name="Rey M."/>
            <person name="Reynolds S."/>
            <person name="Rieger M."/>
            <person name="Rivolta C."/>
            <person name="Rocha E."/>
            <person name="Roche B."/>
            <person name="Rose M."/>
            <person name="Sadaie Y."/>
            <person name="Sato T."/>
            <person name="Scanlan E."/>
            <person name="Schleich S."/>
            <person name="Schroeter R."/>
            <person name="Scoffone F."/>
            <person name="Sekiguchi J."/>
            <person name="Sekowska A."/>
            <person name="Seror S.J."/>
            <person name="Serror P."/>
            <person name="Shin B.-S."/>
            <person name="Soldo B."/>
            <person name="Sorokin A."/>
            <person name="Tacconi E."/>
            <person name="Takagi T."/>
            <person name="Takahashi H."/>
            <person name="Takemaru K."/>
            <person name="Takeuchi M."/>
            <person name="Tamakoshi A."/>
            <person name="Tanaka T."/>
            <person name="Terpstra P."/>
            <person name="Tognoni A."/>
            <person name="Tosato V."/>
            <person name="Uchiyama S."/>
            <person name="Vandenbol M."/>
            <person name="Vannier F."/>
            <person name="Vassarotti A."/>
            <person name="Viari A."/>
            <person name="Wambutt R."/>
            <person name="Wedler E."/>
            <person name="Wedler H."/>
            <person name="Weitzenegger T."/>
            <person name="Winters P."/>
            <person name="Wipat A."/>
            <person name="Yamamoto H."/>
            <person name="Yamane K."/>
            <person name="Yasumoto K."/>
            <person name="Yata K."/>
            <person name="Yoshida K."/>
            <person name="Yoshikawa H.-F."/>
            <person name="Zumstein E."/>
            <person name="Yoshikawa H."/>
            <person name="Danchin A."/>
        </authorList>
    </citation>
    <scope>NUCLEOTIDE SEQUENCE [LARGE SCALE GENOMIC DNA]</scope>
    <source>
        <strain>168</strain>
    </source>
</reference>
<gene>
    <name type="primary">yraJ</name>
    <name type="ordered locus">BSU26920</name>
</gene>
<accession>O07934</accession>
<comment type="similarity">
    <text evidence="3">To B.subtilis YraI.</text>
</comment>
<comment type="sequence caution" evidence="3">
    <conflict type="erroneous initiation">
        <sequence resource="EMBL-CDS" id="AAB80879"/>
    </conflict>
</comment>
<comment type="sequence caution" evidence="3">
    <conflict type="erroneous initiation">
        <sequence resource="EMBL-CDS" id="CAA63452"/>
    </conflict>
</comment>
<protein>
    <recommendedName>
        <fullName>Uncharacterized protein YraJ</fullName>
    </recommendedName>
</protein>
<keyword id="KW-1185">Reference proteome</keyword>
<keyword id="KW-0732">Signal</keyword>
<evidence type="ECO:0000255" key="1"/>
<evidence type="ECO:0000255" key="2">
    <source>
        <dbReference type="PROSITE-ProRule" id="PRU01117"/>
    </source>
</evidence>
<evidence type="ECO:0000305" key="3"/>
<organism>
    <name type="scientific">Bacillus subtilis (strain 168)</name>
    <dbReference type="NCBI Taxonomy" id="224308"/>
    <lineage>
        <taxon>Bacteria</taxon>
        <taxon>Bacillati</taxon>
        <taxon>Bacillota</taxon>
        <taxon>Bacilli</taxon>
        <taxon>Bacillales</taxon>
        <taxon>Bacillaceae</taxon>
        <taxon>Bacillus</taxon>
    </lineage>
</organism>
<proteinExistence type="inferred from homology"/>
<feature type="signal peptide" evidence="1">
    <location>
        <begin position="1"/>
        <end position="26"/>
    </location>
</feature>
<feature type="chain" id="PRO_0000049857" description="Uncharacterized protein YraJ">
    <location>
        <begin position="27"/>
        <end position="118"/>
    </location>
</feature>
<feature type="domain" description="SH3b" evidence="2">
    <location>
        <begin position="30"/>
        <end position="104"/>
    </location>
</feature>
<name>YRAJ_BACSU</name>
<dbReference type="EMBL" id="X92868">
    <property type="protein sequence ID" value="CAA63452.1"/>
    <property type="status" value="ALT_INIT"/>
    <property type="molecule type" value="Genomic_DNA"/>
</dbReference>
<dbReference type="EMBL" id="U93875">
    <property type="protein sequence ID" value="AAB80879.1"/>
    <property type="status" value="ALT_INIT"/>
    <property type="molecule type" value="Genomic_DNA"/>
</dbReference>
<dbReference type="EMBL" id="AL009126">
    <property type="protein sequence ID" value="CAB14633.2"/>
    <property type="molecule type" value="Genomic_DNA"/>
</dbReference>
<dbReference type="PIR" id="B69971">
    <property type="entry name" value="B69971"/>
</dbReference>
<dbReference type="RefSeq" id="NP_390569.2">
    <property type="nucleotide sequence ID" value="NC_000964.3"/>
</dbReference>
<dbReference type="RefSeq" id="WP_004398671.1">
    <property type="nucleotide sequence ID" value="NZ_OZ025638.1"/>
</dbReference>
<dbReference type="SMR" id="O07934"/>
<dbReference type="FunCoup" id="O07934">
    <property type="interactions" value="22"/>
</dbReference>
<dbReference type="STRING" id="224308.BSU26920"/>
<dbReference type="PaxDb" id="224308-BSU26920"/>
<dbReference type="EnsemblBacteria" id="CAB14633">
    <property type="protein sequence ID" value="CAB14633"/>
    <property type="gene ID" value="BSU_26920"/>
</dbReference>
<dbReference type="GeneID" id="937609"/>
<dbReference type="KEGG" id="bsu:BSU26920"/>
<dbReference type="PATRIC" id="fig|224308.179.peg.2924"/>
<dbReference type="eggNOG" id="COG4991">
    <property type="taxonomic scope" value="Bacteria"/>
</dbReference>
<dbReference type="InParanoid" id="O07934"/>
<dbReference type="OrthoDB" id="1164310at2"/>
<dbReference type="PhylomeDB" id="O07934"/>
<dbReference type="BioCyc" id="BSUB:BSU26920-MONOMER"/>
<dbReference type="PRO" id="PR:O07934"/>
<dbReference type="Proteomes" id="UP000001570">
    <property type="component" value="Chromosome"/>
</dbReference>
<dbReference type="Gene3D" id="2.30.30.40">
    <property type="entry name" value="SH3 Domains"/>
    <property type="match status" value="1"/>
</dbReference>
<dbReference type="InterPro" id="IPR003646">
    <property type="entry name" value="SH3-like_bac-type"/>
</dbReference>
<dbReference type="SMART" id="SM00287">
    <property type="entry name" value="SH3b"/>
    <property type="match status" value="1"/>
</dbReference>
<dbReference type="PROSITE" id="PS51781">
    <property type="entry name" value="SH3B"/>
    <property type="match status" value="1"/>
</dbReference>
<sequence length="118" mass="12876">MTKLKMLSMLTVMIASLFIFSSQALAVQYFTVSTSSGAPVNMRSGPGTNYPIMLSIPSGSRVPYYCYAYGTTVTGKYGTSNIWDQIQWKDSRGVVNIGYVSDTYVYTGSDGPVGYKCN</sequence>